<comment type="function">
    <text evidence="2">Is able to inhibit all four classes of proteinases by a unique 'trapping' mechanism. This protein has a peptide stretch, called the 'bait region' which contains specific cleavage sites for different proteinases. When a proteinase cleaves the bait region, a conformational change is induced in the protein which traps the proteinase. The entrapped enzyme remains active against low molecular weight substrates (activity against high molecular weight substrates is greatly reduced). Following cleavage in the bait region a thioester bond is hydrolyzed and mediates the covalent binding of the protein to the proteinase (By similarity).</text>
</comment>
<comment type="subunit">
    <text evidence="2">Homotetramer; disulfide-linked.</text>
</comment>
<comment type="subcellular location">
    <subcellularLocation>
        <location evidence="1">Secreted</location>
    </subcellularLocation>
</comment>
<comment type="tissue specificity">
    <text evidence="4">Expressed in uterus, mesometrial lymphoid aggregate and mammary tissue during pregnancy. Expressed in ovary, testis and kidney. Low level expression in heart. Not expressed in liver.</text>
</comment>
<comment type="developmental stage">
    <text evidence="4">Expressed in uterus of pregnant females during decidualization from 6 dpc with highest level around 10 dpc declining throughout the rest of the pregnancy.</text>
</comment>
<comment type="similarity">
    <text evidence="3">Belongs to the protease inhibitor I39 (alpha-2-macroglobulin) family.</text>
</comment>
<name>A2MG_MOUSE</name>
<dbReference type="EMBL" id="AY185125">
    <property type="protein sequence ID" value="AAO25741.1"/>
    <property type="molecule type" value="mRNA"/>
</dbReference>
<dbReference type="EMBL" id="AC153581">
    <property type="status" value="NOT_ANNOTATED_CDS"/>
    <property type="molecule type" value="Genomic_DNA"/>
</dbReference>
<dbReference type="EMBL" id="BC072642">
    <property type="protein sequence ID" value="AAH72642.1"/>
    <property type="molecule type" value="mRNA"/>
</dbReference>
<dbReference type="CCDS" id="CCDS39617.1"/>
<dbReference type="RefSeq" id="NP_783327.2">
    <property type="nucleotide sequence ID" value="NM_175628.3"/>
</dbReference>
<dbReference type="SMR" id="Q6GQT1"/>
<dbReference type="BioGRID" id="231245">
    <property type="interactions" value="7"/>
</dbReference>
<dbReference type="FunCoup" id="Q6GQT1">
    <property type="interactions" value="550"/>
</dbReference>
<dbReference type="IntAct" id="Q6GQT1">
    <property type="interactions" value="2"/>
</dbReference>
<dbReference type="MINT" id="Q6GQT1"/>
<dbReference type="STRING" id="10090.ENSMUSP00000032203"/>
<dbReference type="MEROPS" id="I39.004"/>
<dbReference type="GlyCosmos" id="Q6GQT1">
    <property type="glycosylation" value="9 sites, No reported glycans"/>
</dbReference>
<dbReference type="GlyGen" id="Q6GQT1">
    <property type="glycosylation" value="12 sites, 1 N-linked glycan (3 sites), 1 O-linked glycan (3 sites)"/>
</dbReference>
<dbReference type="iPTMnet" id="Q6GQT1"/>
<dbReference type="PhosphoSitePlus" id="Q6GQT1"/>
<dbReference type="SwissPalm" id="Q6GQT1"/>
<dbReference type="CPTAC" id="non-CPTAC-3311"/>
<dbReference type="CPTAC" id="non-CPTAC-3384"/>
<dbReference type="jPOST" id="Q6GQT1"/>
<dbReference type="PaxDb" id="10090-ENSMUSP00000032203"/>
<dbReference type="PeptideAtlas" id="Q6GQT1"/>
<dbReference type="ProteomicsDB" id="286006"/>
<dbReference type="Antibodypedia" id="859">
    <property type="antibodies" value="996 antibodies from 42 providers"/>
</dbReference>
<dbReference type="DNASU" id="232345"/>
<dbReference type="Ensembl" id="ENSMUST00000032203.9">
    <property type="protein sequence ID" value="ENSMUSP00000032203.8"/>
    <property type="gene ID" value="ENSMUSG00000030111.10"/>
</dbReference>
<dbReference type="GeneID" id="232345"/>
<dbReference type="KEGG" id="mmu:232345"/>
<dbReference type="UCSC" id="uc009doq.1">
    <property type="organism name" value="mouse"/>
</dbReference>
<dbReference type="AGR" id="MGI:2449119"/>
<dbReference type="CTD" id="2"/>
<dbReference type="MGI" id="MGI:2449119">
    <property type="gene designation" value="A2m"/>
</dbReference>
<dbReference type="VEuPathDB" id="HostDB:ENSMUSG00000030111"/>
<dbReference type="eggNOG" id="KOG1366">
    <property type="taxonomic scope" value="Eukaryota"/>
</dbReference>
<dbReference type="GeneTree" id="ENSGT00940000154904"/>
<dbReference type="HOGENOM" id="CLU_001634_0_1_1"/>
<dbReference type="InParanoid" id="Q6GQT1"/>
<dbReference type="OMA" id="HVNRTEV"/>
<dbReference type="OrthoDB" id="9998011at2759"/>
<dbReference type="PhylomeDB" id="Q6GQT1"/>
<dbReference type="TreeFam" id="TF313285"/>
<dbReference type="Reactome" id="R-MMU-114608">
    <property type="pathway name" value="Platelet degranulation"/>
</dbReference>
<dbReference type="Reactome" id="R-MMU-140837">
    <property type="pathway name" value="Intrinsic Pathway of Fibrin Clot Formation"/>
</dbReference>
<dbReference type="Reactome" id="R-MMU-1474228">
    <property type="pathway name" value="Degradation of the extracellular matrix"/>
</dbReference>
<dbReference type="Reactome" id="R-MMU-8963896">
    <property type="pathway name" value="HDL assembly"/>
</dbReference>
<dbReference type="BioGRID-ORCS" id="232345">
    <property type="hits" value="3 hits in 78 CRISPR screens"/>
</dbReference>
<dbReference type="ChiTaRS" id="A2m">
    <property type="organism name" value="mouse"/>
</dbReference>
<dbReference type="PRO" id="PR:Q6GQT1"/>
<dbReference type="Proteomes" id="UP000000589">
    <property type="component" value="Chromosome 6"/>
</dbReference>
<dbReference type="RNAct" id="Q6GQT1">
    <property type="molecule type" value="protein"/>
</dbReference>
<dbReference type="Bgee" id="ENSMUSG00000030111">
    <property type="expression patterns" value="Expressed in gastrula and 145 other cell types or tissues"/>
</dbReference>
<dbReference type="ExpressionAtlas" id="Q6GQT1">
    <property type="expression patterns" value="baseline and differential"/>
</dbReference>
<dbReference type="GO" id="GO:0005615">
    <property type="term" value="C:extracellular space"/>
    <property type="evidence" value="ECO:0007669"/>
    <property type="project" value="InterPro"/>
</dbReference>
<dbReference type="GO" id="GO:0048306">
    <property type="term" value="F:calcium-dependent protein binding"/>
    <property type="evidence" value="ECO:0007669"/>
    <property type="project" value="Ensembl"/>
</dbReference>
<dbReference type="GO" id="GO:0019966">
    <property type="term" value="F:interleukin-1 binding"/>
    <property type="evidence" value="ECO:0007669"/>
    <property type="project" value="Ensembl"/>
</dbReference>
<dbReference type="GO" id="GO:0019959">
    <property type="term" value="F:interleukin-8 binding"/>
    <property type="evidence" value="ECO:0007669"/>
    <property type="project" value="Ensembl"/>
</dbReference>
<dbReference type="GO" id="GO:0030414">
    <property type="term" value="F:peptidase inhibitor activity"/>
    <property type="evidence" value="ECO:0000304"/>
    <property type="project" value="MGI"/>
</dbReference>
<dbReference type="GO" id="GO:0002020">
    <property type="term" value="F:protease binding"/>
    <property type="evidence" value="ECO:0007669"/>
    <property type="project" value="Ensembl"/>
</dbReference>
<dbReference type="GO" id="GO:0004867">
    <property type="term" value="F:serine-type endopeptidase inhibitor activity"/>
    <property type="evidence" value="ECO:0007669"/>
    <property type="project" value="UniProtKB-KW"/>
</dbReference>
<dbReference type="GO" id="GO:0005102">
    <property type="term" value="F:signaling receptor binding"/>
    <property type="evidence" value="ECO:0007669"/>
    <property type="project" value="Ensembl"/>
</dbReference>
<dbReference type="GO" id="GO:0043120">
    <property type="term" value="F:tumor necrosis factor binding"/>
    <property type="evidence" value="ECO:0007669"/>
    <property type="project" value="Ensembl"/>
</dbReference>
<dbReference type="GO" id="GO:0007565">
    <property type="term" value="P:female pregnancy"/>
    <property type="evidence" value="ECO:0007669"/>
    <property type="project" value="UniProtKB-KW"/>
</dbReference>
<dbReference type="GO" id="GO:0001869">
    <property type="term" value="P:negative regulation of complement activation, lectin pathway"/>
    <property type="evidence" value="ECO:0007669"/>
    <property type="project" value="Ensembl"/>
</dbReference>
<dbReference type="GO" id="GO:0048863">
    <property type="term" value="P:stem cell differentiation"/>
    <property type="evidence" value="ECO:0000314"/>
    <property type="project" value="MGI"/>
</dbReference>
<dbReference type="CDD" id="cd02897">
    <property type="entry name" value="A2M_2"/>
    <property type="match status" value="1"/>
</dbReference>
<dbReference type="FunFam" id="2.60.40.1940:FF:000002">
    <property type="entry name" value="Alpha-2-macroglobulin"/>
    <property type="match status" value="1"/>
</dbReference>
<dbReference type="FunFam" id="2.60.40.10:FF:000312">
    <property type="entry name" value="Alpha-2-macroglobulin like 1"/>
    <property type="match status" value="1"/>
</dbReference>
<dbReference type="FunFam" id="1.50.10.20:FF:000001">
    <property type="entry name" value="CD109 isoform 1"/>
    <property type="match status" value="1"/>
</dbReference>
<dbReference type="FunFam" id="2.60.40.1930:FF:000001">
    <property type="entry name" value="CD109 isoform 3"/>
    <property type="match status" value="1"/>
</dbReference>
<dbReference type="FunFam" id="2.60.40.1930:FF:000002">
    <property type="entry name" value="PZP, alpha-2-macroglobulin like"/>
    <property type="match status" value="1"/>
</dbReference>
<dbReference type="FunFam" id="2.60.40.690:FF:000001">
    <property type="entry name" value="PZP, alpha-2-macroglobulin like"/>
    <property type="match status" value="1"/>
</dbReference>
<dbReference type="Gene3D" id="1.50.10.20">
    <property type="match status" value="1"/>
</dbReference>
<dbReference type="Gene3D" id="2.20.130.20">
    <property type="match status" value="1"/>
</dbReference>
<dbReference type="Gene3D" id="2.60.120.1540">
    <property type="match status" value="1"/>
</dbReference>
<dbReference type="Gene3D" id="2.60.40.1930">
    <property type="match status" value="2"/>
</dbReference>
<dbReference type="Gene3D" id="2.60.40.1940">
    <property type="match status" value="1"/>
</dbReference>
<dbReference type="Gene3D" id="2.60.40.690">
    <property type="entry name" value="Alpha-macroglobulin, receptor-binding domain"/>
    <property type="match status" value="1"/>
</dbReference>
<dbReference type="Gene3D" id="2.60.40.10">
    <property type="entry name" value="Immunoglobulins"/>
    <property type="match status" value="2"/>
</dbReference>
<dbReference type="InterPro" id="IPR009048">
    <property type="entry name" value="A-macroglobulin_rcpt-bd"/>
</dbReference>
<dbReference type="InterPro" id="IPR036595">
    <property type="entry name" value="A-macroglobulin_rcpt-bd_sf"/>
</dbReference>
<dbReference type="InterPro" id="IPR050473">
    <property type="entry name" value="A2M/Complement_sys"/>
</dbReference>
<dbReference type="InterPro" id="IPR011625">
    <property type="entry name" value="A2M_N_BRD"/>
</dbReference>
<dbReference type="InterPro" id="IPR041813">
    <property type="entry name" value="A2M_TED"/>
</dbReference>
<dbReference type="InterPro" id="IPR047565">
    <property type="entry name" value="Alpha-macroglob_thiol-ester_cl"/>
</dbReference>
<dbReference type="InterPro" id="IPR011626">
    <property type="entry name" value="Alpha-macroglobulin_TED"/>
</dbReference>
<dbReference type="InterPro" id="IPR013783">
    <property type="entry name" value="Ig-like_fold"/>
</dbReference>
<dbReference type="InterPro" id="IPR014756">
    <property type="entry name" value="Ig_E-set"/>
</dbReference>
<dbReference type="InterPro" id="IPR001599">
    <property type="entry name" value="Macroglobln_a2"/>
</dbReference>
<dbReference type="InterPro" id="IPR019742">
    <property type="entry name" value="MacrogloblnA2_CS"/>
</dbReference>
<dbReference type="InterPro" id="IPR002890">
    <property type="entry name" value="MG2"/>
</dbReference>
<dbReference type="InterPro" id="IPR041555">
    <property type="entry name" value="MG3"/>
</dbReference>
<dbReference type="InterPro" id="IPR040839">
    <property type="entry name" value="MG4"/>
</dbReference>
<dbReference type="InterPro" id="IPR008930">
    <property type="entry name" value="Terpenoid_cyclase/PrenylTrfase"/>
</dbReference>
<dbReference type="PANTHER" id="PTHR11412:SF165">
    <property type="entry name" value="ALPHA-2-MACROGLOBULIN"/>
    <property type="match status" value="1"/>
</dbReference>
<dbReference type="PANTHER" id="PTHR11412">
    <property type="entry name" value="MACROGLOBULIN / COMPLEMENT"/>
    <property type="match status" value="1"/>
</dbReference>
<dbReference type="Pfam" id="PF00207">
    <property type="entry name" value="A2M"/>
    <property type="match status" value="1"/>
</dbReference>
<dbReference type="Pfam" id="PF07703">
    <property type="entry name" value="A2M_BRD"/>
    <property type="match status" value="1"/>
</dbReference>
<dbReference type="Pfam" id="PF07677">
    <property type="entry name" value="A2M_recep"/>
    <property type="match status" value="1"/>
</dbReference>
<dbReference type="Pfam" id="PF01835">
    <property type="entry name" value="MG2"/>
    <property type="match status" value="1"/>
</dbReference>
<dbReference type="Pfam" id="PF17791">
    <property type="entry name" value="MG3"/>
    <property type="match status" value="1"/>
</dbReference>
<dbReference type="Pfam" id="PF17789">
    <property type="entry name" value="MG4"/>
    <property type="match status" value="1"/>
</dbReference>
<dbReference type="Pfam" id="PF07678">
    <property type="entry name" value="TED_complement"/>
    <property type="match status" value="1"/>
</dbReference>
<dbReference type="SMART" id="SM01360">
    <property type="entry name" value="A2M"/>
    <property type="match status" value="1"/>
</dbReference>
<dbReference type="SMART" id="SM01359">
    <property type="entry name" value="A2M_N_2"/>
    <property type="match status" value="1"/>
</dbReference>
<dbReference type="SMART" id="SM01361">
    <property type="entry name" value="A2M_recep"/>
    <property type="match status" value="1"/>
</dbReference>
<dbReference type="SMART" id="SM01419">
    <property type="entry name" value="Thiol-ester_cl"/>
    <property type="match status" value="1"/>
</dbReference>
<dbReference type="SUPFAM" id="SSF49410">
    <property type="entry name" value="Alpha-macroglobulin receptor domain"/>
    <property type="match status" value="1"/>
</dbReference>
<dbReference type="SUPFAM" id="SSF81296">
    <property type="entry name" value="E set domains"/>
    <property type="match status" value="1"/>
</dbReference>
<dbReference type="SUPFAM" id="SSF48239">
    <property type="entry name" value="Terpenoid cyclases/Protein prenyltransferases"/>
    <property type="match status" value="1"/>
</dbReference>
<dbReference type="PROSITE" id="PS00477">
    <property type="entry name" value="ALPHA_2_MACROGLOBULIN"/>
    <property type="match status" value="1"/>
</dbReference>
<feature type="signal peptide" evidence="3">
    <location>
        <begin position="1"/>
        <end position="32"/>
    </location>
</feature>
<feature type="chain" id="PRO_0000271402" description="Alpha-2-macroglobulin-P" evidence="3">
    <location>
        <begin position="33"/>
        <end position="1474"/>
    </location>
</feature>
<feature type="region of interest" description="Bait region" evidence="2">
    <location>
        <begin position="623"/>
        <end position="752"/>
    </location>
</feature>
<feature type="glycosylation site" description="N-linked (GlcNAc...) asparagine" evidence="3">
    <location>
        <position position="62"/>
    </location>
</feature>
<feature type="glycosylation site" description="N-linked (GlcNAc...) asparagine" evidence="3">
    <location>
        <position position="77"/>
    </location>
</feature>
<feature type="glycosylation site" description="N-linked (GlcNAc...) asparagine" evidence="3">
    <location>
        <position position="253"/>
    </location>
</feature>
<feature type="glycosylation site" description="N-linked (GlcNAc...) asparagine" evidence="3">
    <location>
        <position position="402"/>
    </location>
</feature>
<feature type="glycosylation site" description="N-linked (GlcNAc...) asparagine" evidence="3">
    <location>
        <position position="654"/>
    </location>
</feature>
<feature type="glycosylation site" description="N-linked (GlcNAc...) asparagine" evidence="3">
    <location>
        <position position="774"/>
    </location>
</feature>
<feature type="glycosylation site" description="N-linked (GlcNAc...) asparagine" evidence="3">
    <location>
        <position position="869"/>
    </location>
</feature>
<feature type="glycosylation site" description="N-linked (GlcNAc...) asparagine" evidence="3">
    <location>
        <position position="991"/>
    </location>
</feature>
<feature type="glycosylation site" description="N-linked (GlcNAc...) asparagine" evidence="3">
    <location>
        <position position="1366"/>
    </location>
</feature>
<feature type="disulfide bond" evidence="2">
    <location>
        <begin position="55"/>
        <end position="93"/>
    </location>
</feature>
<feature type="disulfide bond" evidence="2">
    <location>
        <begin position="257"/>
        <end position="305"/>
    </location>
</feature>
<feature type="disulfide bond" evidence="2">
    <location>
        <begin position="275"/>
        <end position="293"/>
    </location>
</feature>
<feature type="disulfide bond" description="Interchain (with C-437)" evidence="2">
    <location>
        <position position="284"/>
    </location>
</feature>
<feature type="disulfide bond" description="Interchain (with C-284)" evidence="2">
    <location>
        <position position="437"/>
    </location>
</feature>
<feature type="disulfide bond" evidence="2">
    <location>
        <begin position="476"/>
        <end position="569"/>
    </location>
</feature>
<feature type="disulfide bond" evidence="2">
    <location>
        <begin position="601"/>
        <end position="771"/>
    </location>
</feature>
<feature type="disulfide bond" evidence="2">
    <location>
        <begin position="650"/>
        <end position="697"/>
    </location>
</feature>
<feature type="disulfide bond" evidence="2">
    <location>
        <begin position="821"/>
        <end position="849"/>
    </location>
</feature>
<feature type="disulfide bond" evidence="2">
    <location>
        <begin position="847"/>
        <end position="883"/>
    </location>
</feature>
<feature type="disulfide bond" evidence="2">
    <location>
        <begin position="921"/>
        <end position="1321"/>
    </location>
</feature>
<feature type="disulfide bond" evidence="2">
    <location>
        <begin position="1079"/>
        <end position="1127"/>
    </location>
</feature>
<feature type="disulfide bond" evidence="2">
    <location>
        <begin position="1352"/>
        <end position="1467"/>
    </location>
</feature>
<feature type="cross-link" description="Isoglutamyl cysteine thioester (Cys-Gln)" evidence="2">
    <location>
        <begin position="972"/>
        <end position="975"/>
    </location>
</feature>
<feature type="sequence conflict" description="In Ref. 1; AAO25741." evidence="5" ref="1">
    <original>R</original>
    <variation>G</variation>
    <location>
        <position position="366"/>
    </location>
</feature>
<feature type="sequence conflict" description="In Ref. 1; AAO25741." evidence="5" ref="1">
    <original>H</original>
    <variation>R</variation>
    <location>
        <position position="452"/>
    </location>
</feature>
<feature type="sequence conflict" description="In Ref. 1; AAO25741." evidence="5" ref="1">
    <original>NGILYSPV</original>
    <variation>RNPVLPR</variation>
    <location>
        <begin position="659"/>
        <end position="666"/>
    </location>
</feature>
<feature type="sequence conflict" description="In Ref. 3; AAH72642." evidence="5" ref="3">
    <original>P</original>
    <variation>A</variation>
    <location>
        <position position="799"/>
    </location>
</feature>
<proteinExistence type="evidence at transcript level"/>
<protein>
    <recommendedName>
        <fullName>Alpha-2-macroglobulin-P</fullName>
    </recommendedName>
    <alternativeName>
        <fullName>Alpha-2-macroglobulin</fullName>
    </alternativeName>
</protein>
<organism>
    <name type="scientific">Mus musculus</name>
    <name type="common">Mouse</name>
    <dbReference type="NCBI Taxonomy" id="10090"/>
    <lineage>
        <taxon>Eukaryota</taxon>
        <taxon>Metazoa</taxon>
        <taxon>Chordata</taxon>
        <taxon>Craniata</taxon>
        <taxon>Vertebrata</taxon>
        <taxon>Euteleostomi</taxon>
        <taxon>Mammalia</taxon>
        <taxon>Eutheria</taxon>
        <taxon>Euarchontoglires</taxon>
        <taxon>Glires</taxon>
        <taxon>Rodentia</taxon>
        <taxon>Myomorpha</taxon>
        <taxon>Muroidea</taxon>
        <taxon>Muridae</taxon>
        <taxon>Murinae</taxon>
        <taxon>Mus</taxon>
        <taxon>Mus</taxon>
    </lineage>
</organism>
<gene>
    <name evidence="8" type="primary">A2m</name>
    <name evidence="7" type="synonym">A2mp</name>
</gene>
<keyword id="KW-0082">Bait region</keyword>
<keyword id="KW-1015">Disulfide bond</keyword>
<keyword id="KW-0325">Glycoprotein</keyword>
<keyword id="KW-0635">Pregnancy</keyword>
<keyword id="KW-0646">Protease inhibitor</keyword>
<keyword id="KW-1185">Reference proteome</keyword>
<keyword id="KW-0964">Secreted</keyword>
<keyword id="KW-0722">Serine protease inhibitor</keyword>
<keyword id="KW-0732">Signal</keyword>
<keyword id="KW-0882">Thioester bond</keyword>
<evidence type="ECO:0000250" key="1"/>
<evidence type="ECO:0000250" key="2">
    <source>
        <dbReference type="UniProtKB" id="P01023"/>
    </source>
</evidence>
<evidence type="ECO:0000255" key="3"/>
<evidence type="ECO:0000269" key="4">
    <source>
    </source>
</evidence>
<evidence type="ECO:0000305" key="5"/>
<evidence type="ECO:0000312" key="6">
    <source>
        <dbReference type="EMBL" id="AAH72642.1"/>
    </source>
</evidence>
<evidence type="ECO:0000312" key="7">
    <source>
        <dbReference type="EMBL" id="AAO25741.1"/>
    </source>
</evidence>
<evidence type="ECO:0000312" key="8">
    <source>
        <dbReference type="MGI" id="MGI:2449119"/>
    </source>
</evidence>
<sequence length="1474" mass="164353">MGKRWLPSLALLPLPPPLLLLLLLLLPTNASAPQKPIYMVMVPSLLHAGTPEKGCLLFNHLNETVTVKVSMESVRGNQSLFTDLVVDKDLFHCASFIVPQSSSNEVMFLTVQVKGPTHEFRRRSTVLIKTKESLVFAQTDKPIYKPGQMVRFRVVSLDENFHPLNELIPLLYIQDSKKNRIAQWQNFRLEGGLKQLSFPLSSEPTQGSYKVVIRTESGRTVEHPFSVKEFVLPKFEVKVAVPETITILEEEMNVSVCGIYTYGKPVPGHVTVNICRKYSNPSSCFGEESLAFCEKFSQQLDGRGCFSQLVKTKSFQLKRQEYEMQLDVNAKIQEEGTGVEETGKGLTKITRTITKLSFVNVDTHFRQGIPFVGQVLLVDGRGTPIPYEMIFIGADEANQNINTTTDKNGLARFSINTDDIMGTSLTVRAKYKDSNVCYGFRWLTEENVEAWHTANAVFSPSRSFVHLESLPYKLRCEQTLAVQAHYILNDEAVLERKELVFYYLMMAKGGIVRAGTHVLPVTQGHKKGHFSILISMETDLAPVARLVLYTILPNGEVVGDTVKYEIEKCLANKVDLVFHPNIGLPATRAFLSVMASPQSLCGLRAVDQSVLLTKPEAELSASLVYDLLPVKDLTGFPKGVNQQEEDTNGCLKQNDTYINGILYSPVQNTNEEDMYGFLKDMGLKVFTNLNIRKPKVCERLGVNKIPAAYHLVSQGHMDAFLESSESPTETTRSYFPETWIWDLVIVDSTGVAEMEVTVPDTITEWKAGAFCLSNDTGLGLSPVIDFQAFQPFFVDLTMPYSVIRGEAFTLKATVLNYLQTCIRVGVQLEASPDFLATPEEKEQKSHCICMNERHTMSWAVIPKSLGNVNFTVSAEALDSKELCRNEVPVVPERGKKDTIIKSLLVEPEGLENEVTFNSLLCPTGAEVSEQISLKLPSDVVEESARASVTVLGDILGSAMQNTQDLLKMPYGCGEQNMVLFAPNIYVLDYLNETEQLTQEIKTKAITYLNTGYQRQLNYKHRDGSYSTFGDKPGRSHANTWLTAFVLKSFAQARRYIFIDESHITQALTWLSQQQKDNGCFRSSGSLLNNAMKGGVEDEVTLSAYITIALLEMSLPVTHPVVRNALFCLDTAWKSARRGASGNHVYTKALLAYAFALAGNQDTKKEILKSLDEEAVKEDNSVHWTRAQKPRVPADLWYQPQAPSAEVEMTAYVLLAYLTTELVPTREDLTAAMLIVKWLTKQQNSHGGFSSTQDTVVALHALSKYGAATFTRAKKAAHVTIQSSGAFYTKFQVNNDNQLLLQRVTLPTVPGDYTAKVAGEGCVYLQTSLKYSVLPREKEFPFALVVQTLPGTCEDLKAHTTFQISLNISYIGSRSDSNMAIADVKMVSGFIPLKPTVKMLERSVHVSRTEVSNNHVLIYLDKVSNQMLTLFFMVQQDIPVRDLKPAIVKVYDYYEKDEFAVAKYSAPCSAGYGNA</sequence>
<accession>Q6GQT1</accession>
<accession>E9QMQ7</accession>
<accession>Q811S0</accession>
<reference evidence="5 7" key="1">
    <citation type="journal article" date="2005" name="Biol. Reprod.">
        <title>Characterization of a murine alpha 2 macroglobulin gene expressed in reproductive and cardiovascular tissue.</title>
        <authorList>
            <person name="He H."/>
            <person name="McCartney D.J."/>
            <person name="Wei Q."/>
            <person name="Esadeg S."/>
            <person name="Zhang J."/>
            <person name="Foster R.A."/>
            <person name="Hayes M.A."/>
            <person name="Tayade C."/>
            <person name="Van Leuven F."/>
            <person name="Croy B.A."/>
        </authorList>
    </citation>
    <scope>NUCLEOTIDE SEQUENCE [MRNA]</scope>
    <scope>TISSUE SPECIFICITY</scope>
    <scope>DEVELOPMENTAL STAGE</scope>
    <source>
        <strain evidence="7">C57BL/6J</strain>
        <tissue evidence="7">Placenta</tissue>
    </source>
</reference>
<reference key="2">
    <citation type="journal article" date="2009" name="PLoS Biol.">
        <title>Lineage-specific biology revealed by a finished genome assembly of the mouse.</title>
        <authorList>
            <person name="Church D.M."/>
            <person name="Goodstadt L."/>
            <person name="Hillier L.W."/>
            <person name="Zody M.C."/>
            <person name="Goldstein S."/>
            <person name="She X."/>
            <person name="Bult C.J."/>
            <person name="Agarwala R."/>
            <person name="Cherry J.L."/>
            <person name="DiCuccio M."/>
            <person name="Hlavina W."/>
            <person name="Kapustin Y."/>
            <person name="Meric P."/>
            <person name="Maglott D."/>
            <person name="Birtle Z."/>
            <person name="Marques A.C."/>
            <person name="Graves T."/>
            <person name="Zhou S."/>
            <person name="Teague B."/>
            <person name="Potamousis K."/>
            <person name="Churas C."/>
            <person name="Place M."/>
            <person name="Herschleb J."/>
            <person name="Runnheim R."/>
            <person name="Forrest D."/>
            <person name="Amos-Landgraf J."/>
            <person name="Schwartz D.C."/>
            <person name="Cheng Z."/>
            <person name="Lindblad-Toh K."/>
            <person name="Eichler E.E."/>
            <person name="Ponting C.P."/>
        </authorList>
    </citation>
    <scope>NUCLEOTIDE SEQUENCE [LARGE SCALE GENOMIC DNA]</scope>
    <source>
        <strain>C57BL/6J</strain>
    </source>
</reference>
<reference evidence="6" key="3">
    <citation type="journal article" date="2004" name="Genome Res.">
        <title>The status, quality, and expansion of the NIH full-length cDNA project: the Mammalian Gene Collection (MGC).</title>
        <authorList>
            <consortium name="The MGC Project Team"/>
        </authorList>
    </citation>
    <scope>NUCLEOTIDE SEQUENCE [LARGE SCALE MRNA]</scope>
    <source>
        <strain evidence="6">C57BL/6J</strain>
        <tissue evidence="6">Brain</tissue>
    </source>
</reference>